<feature type="signal peptide" evidence="4">
    <location>
        <begin position="1"/>
        <end position="24"/>
    </location>
</feature>
<feature type="chain" id="PRO_0000459529" description="Alpha-actitoxin-Ms11a-3">
    <location>
        <begin position="25"/>
        <end position="66"/>
    </location>
</feature>
<feature type="modified residue" description="Lysine amide" evidence="4">
    <location>
        <position position="66"/>
    </location>
</feature>
<feature type="disulfide bond" evidence="1 5">
    <location>
        <begin position="26"/>
        <end position="41"/>
    </location>
</feature>
<feature type="disulfide bond" evidence="1 5">
    <location>
        <begin position="33"/>
        <end position="46"/>
    </location>
</feature>
<feature type="disulfide bond" evidence="1 5">
    <location>
        <begin position="40"/>
        <end position="61"/>
    </location>
</feature>
<feature type="strand" evidence="6">
    <location>
        <begin position="32"/>
        <end position="34"/>
    </location>
</feature>
<feature type="strand" evidence="6">
    <location>
        <begin position="44"/>
        <end position="46"/>
    </location>
</feature>
<feature type="strand" evidence="6">
    <location>
        <begin position="59"/>
        <end position="63"/>
    </location>
</feature>
<sequence>MASKIFFVLAVFLVMSAVLPESFAGCKKLNSYCTRQHRECCHGLVCRRPDYGIGRGILWKCTRARKG</sequence>
<accession>P0DRC2</accession>
<reference key="1">
    <citation type="journal article" date="2022" name="Toxins">
        <title>Peptides from the sea anemone Metridium senile with modified inhibitor cystine knot (ICK) fold inhibit nicotinic acetylcholine receptors.</title>
        <authorList>
            <person name="Kasheverov I.E."/>
            <person name="Logashina Y.A."/>
            <person name="Kornilov F.D."/>
            <person name="Lushpa V.A."/>
            <person name="Maleeva E.E."/>
            <person name="Korolkova Y.V."/>
            <person name="Yu J."/>
            <person name="Zhu X."/>
            <person name="Zhangsun D."/>
            <person name="Luo S."/>
            <person name="Stensvaag K."/>
            <person name="Kudryavtsev D.S."/>
            <person name="Mineev K.S."/>
            <person name="Andreev Y.A."/>
        </authorList>
    </citation>
    <scope>NUCLEOTIDE SEQUENCE [MRNA]</scope>
    <scope>PROTEIN SEQUENCE OF 25-54</scope>
    <scope>MASS SPECTROMETRY</scope>
    <scope>RECOMBINANT EXPRESSION</scope>
    <scope>PROBABLE AMIDATION AT LYS-66</scope>
    <scope>STRUCTURE BY NMR OF 25-66</scope>
    <source>
        <tissue>Tentacle</tissue>
    </source>
</reference>
<dbReference type="EMBL" id="ON605615">
    <property type="protein sequence ID" value="WCB99797.1"/>
    <property type="molecule type" value="mRNA"/>
</dbReference>
<dbReference type="PDB" id="6XYI">
    <property type="method" value="NMR"/>
    <property type="chains" value="A=25-66"/>
</dbReference>
<dbReference type="PDBsum" id="6XYI"/>
<dbReference type="SMR" id="P0DRC2"/>
<dbReference type="GO" id="GO:0005576">
    <property type="term" value="C:extracellular region"/>
    <property type="evidence" value="ECO:0007669"/>
    <property type="project" value="UniProtKB-SubCell"/>
</dbReference>
<dbReference type="GO" id="GO:0035792">
    <property type="term" value="C:host cell postsynaptic membrane"/>
    <property type="evidence" value="ECO:0007669"/>
    <property type="project" value="UniProtKB-KW"/>
</dbReference>
<dbReference type="GO" id="GO:0042151">
    <property type="term" value="C:nematocyst"/>
    <property type="evidence" value="ECO:0007669"/>
    <property type="project" value="UniProtKB-SubCell"/>
</dbReference>
<dbReference type="GO" id="GO:0030550">
    <property type="term" value="F:acetylcholine receptor inhibitor activity"/>
    <property type="evidence" value="ECO:0007669"/>
    <property type="project" value="UniProtKB-KW"/>
</dbReference>
<dbReference type="GO" id="GO:0090729">
    <property type="term" value="F:toxin activity"/>
    <property type="evidence" value="ECO:0007669"/>
    <property type="project" value="UniProtKB-KW"/>
</dbReference>
<keyword id="KW-0002">3D-structure</keyword>
<keyword id="KW-0008">Acetylcholine receptor inhibiting toxin</keyword>
<keyword id="KW-0027">Amidation</keyword>
<keyword id="KW-0903">Direct protein sequencing</keyword>
<keyword id="KW-1015">Disulfide bond</keyword>
<keyword id="KW-0960">Knottin</keyword>
<keyword id="KW-0166">Nematocyst</keyword>
<keyword id="KW-0528">Neurotoxin</keyword>
<keyword id="KW-0629">Postsynaptic neurotoxin</keyword>
<keyword id="KW-0964">Secreted</keyword>
<keyword id="KW-0732">Signal</keyword>
<keyword id="KW-0800">Toxin</keyword>
<name>AITX3_METSE</name>
<organism>
    <name type="scientific">Metridium senile</name>
    <name type="common">Brown sea anemone</name>
    <name type="synonym">Frilled sea anemone</name>
    <dbReference type="NCBI Taxonomy" id="6116"/>
    <lineage>
        <taxon>Eukaryota</taxon>
        <taxon>Metazoa</taxon>
        <taxon>Cnidaria</taxon>
        <taxon>Anthozoa</taxon>
        <taxon>Hexacorallia</taxon>
        <taxon>Actiniaria</taxon>
        <taxon>Nynantheae</taxon>
        <taxon>Metridiidae</taxon>
        <taxon>Metridium</taxon>
    </lineage>
</organism>
<protein>
    <recommendedName>
        <fullName evidence="4">Alpha-actitoxin-Ms11a-3</fullName>
        <shortName evidence="4">Alpha-AITX-Ms11a-3</shortName>
    </recommendedName>
    <alternativeName>
        <fullName evidence="2">Alpha-anmTX-Ms11a-3</fullName>
    </alternativeName>
</protein>
<proteinExistence type="evidence at protein level"/>
<evidence type="ECO:0000269" key="1">
    <source>
    </source>
</evidence>
<evidence type="ECO:0000303" key="2">
    <source>
    </source>
</evidence>
<evidence type="ECO:0000305" key="3"/>
<evidence type="ECO:0000305" key="4">
    <source>
    </source>
</evidence>
<evidence type="ECO:0007744" key="5">
    <source>
        <dbReference type="PDB" id="6XYI"/>
    </source>
</evidence>
<evidence type="ECO:0007829" key="6">
    <source>
        <dbReference type="PDB" id="6XYI"/>
    </source>
</evidence>
<comment type="function">
    <text evidence="1">Alpha-toxins act on postsynaptic membranes, they bind to the nicotinic acetylcholine receptors (nAChR) and thus inhibit them. This toxin shows inhibition against mouse alpha-1-beta-1-delta-epsilon (CHRNA1-CHRNB1-CHRND-CHRNE) (IC(50)=1215 nM), rat alpha-3-beta-4/CHRNA3-CHRNB4 (IC(50)=5.173 uM), rat alpha-7/CHRNA7 (IC(50)=4.786 uM), human alpha-7/CHRNA7 (IC(50)=8.869 uM), and rat alpha-9-alpha-10/CHRNA9-CHRNA10 (IC(50)=202 nM). Also competes with alpha-bungarotoxin for binding to orthosteric sites on muscle-type T.carlifornicus (IC(50)=256 nM) and human alpha-7/CHRNA7 nAChRs (IC(50)=19.81 uM).</text>
</comment>
<comment type="subcellular location">
    <subcellularLocation>
        <location evidence="1">Secreted</location>
    </subcellularLocation>
    <subcellularLocation>
        <location evidence="3">Nematocyst</location>
    </subcellularLocation>
</comment>
<comment type="domain">
    <text evidence="3">The presence of a 'disulfide through disulfide knot' structurally defines this protein as a knottin.</text>
</comment>
<comment type="mass spectrometry"/>
<comment type="miscellaneous">
    <text evidence="1">Negative results: does not show activity on rat alpha-2-beta-2/CHRNA2-CHRNB2, rat alpha-2-beta-4/CHRNA2-CHRNB4, rat alpha-3-beta-2/CHRNA3-CHRNB2, rat alpha-4-beta-2/CHRNA4-CHRNB2, rat alpha-4-beta-4/CHRNA4-CHRNB4 and rat alpha-6/alpha-3-beta-4 (CHRNA6/CHRNA3-CHRNB4). Does not show activity on rat TRPV1, human TRPV3, rat TRPA1 channels, the human ghrelin receptor, human neurotensin receptor 1, rat ASIC1a and ASIC3 channels.</text>
</comment>